<dbReference type="EMBL" id="AF176009">
    <property type="protein sequence ID" value="AAD52647.1"/>
    <property type="molecule type" value="mRNA"/>
</dbReference>
<dbReference type="EMBL" id="AK003100">
    <property type="protein sequence ID" value="BAB22565.1"/>
    <property type="molecule type" value="mRNA"/>
</dbReference>
<dbReference type="EMBL" id="AK008487">
    <property type="protein sequence ID" value="BAB25694.1"/>
    <property type="molecule type" value="mRNA"/>
</dbReference>
<dbReference type="EMBL" id="AK008712">
    <property type="protein sequence ID" value="BAB25848.1"/>
    <property type="molecule type" value="mRNA"/>
</dbReference>
<dbReference type="EMBL" id="AK011785">
    <property type="protein sequence ID" value="BAB27839.1"/>
    <property type="molecule type" value="mRNA"/>
</dbReference>
<dbReference type="EMBL" id="AK011874">
    <property type="protein sequence ID" value="BAB27892.1"/>
    <property type="molecule type" value="mRNA"/>
</dbReference>
<dbReference type="EMBL" id="AK075890">
    <property type="protein sequence ID" value="BAC36033.1"/>
    <property type="molecule type" value="mRNA"/>
</dbReference>
<dbReference type="EMBL" id="AK161441">
    <property type="protein sequence ID" value="BAE36399.1"/>
    <property type="molecule type" value="mRNA"/>
</dbReference>
<dbReference type="EMBL" id="AK164169">
    <property type="protein sequence ID" value="BAE37660.1"/>
    <property type="molecule type" value="mRNA"/>
</dbReference>
<dbReference type="EMBL" id="BC002152">
    <property type="protein sequence ID" value="AAH02152.1"/>
    <property type="molecule type" value="mRNA"/>
</dbReference>
<dbReference type="EMBL" id="BC038899">
    <property type="protein sequence ID" value="AAH38899.1"/>
    <property type="molecule type" value="mRNA"/>
</dbReference>
<dbReference type="EMBL" id="BC038916">
    <property type="protein sequence ID" value="AAH38916.1"/>
    <property type="molecule type" value="mRNA"/>
</dbReference>
<dbReference type="CCDS" id="CCDS16416.1"/>
<dbReference type="RefSeq" id="NP_001304170.1">
    <property type="nucleotide sequence ID" value="NM_001317241.1"/>
</dbReference>
<dbReference type="RefSeq" id="NP_001304171.1">
    <property type="nucleotide sequence ID" value="NM_001317242.1"/>
</dbReference>
<dbReference type="RefSeq" id="NP_001304172.1">
    <property type="nucleotide sequence ID" value="NM_001317243.1"/>
</dbReference>
<dbReference type="RefSeq" id="NP_001304173.1">
    <property type="nucleotide sequence ID" value="NM_001317244.1"/>
</dbReference>
<dbReference type="RefSeq" id="NP_062732.1">
    <property type="nucleotide sequence ID" value="NM_019758.3"/>
</dbReference>
<dbReference type="SMR" id="Q791V5"/>
<dbReference type="BioGRID" id="207972">
    <property type="interactions" value="8"/>
</dbReference>
<dbReference type="FunCoup" id="Q791V5">
    <property type="interactions" value="2952"/>
</dbReference>
<dbReference type="IntAct" id="Q791V5">
    <property type="interactions" value="5"/>
</dbReference>
<dbReference type="MINT" id="Q791V5"/>
<dbReference type="STRING" id="10090.ENSMUSP00000118566"/>
<dbReference type="GlyGen" id="Q791V5">
    <property type="glycosylation" value="1 site, 1 O-linked glycan (1 site)"/>
</dbReference>
<dbReference type="iPTMnet" id="Q791V5"/>
<dbReference type="PhosphoSitePlus" id="Q791V5"/>
<dbReference type="SwissPalm" id="Q791V5"/>
<dbReference type="jPOST" id="Q791V5"/>
<dbReference type="PaxDb" id="10090-ENSMUSP00000121851"/>
<dbReference type="ProteomicsDB" id="287626"/>
<dbReference type="Pumba" id="Q791V5"/>
<dbReference type="Antibodypedia" id="26842">
    <property type="antibodies" value="229 antibodies from 32 providers"/>
</dbReference>
<dbReference type="DNASU" id="56428"/>
<dbReference type="Ensembl" id="ENSMUST00000136872.8">
    <property type="protein sequence ID" value="ENSMUSP00000121851.2"/>
    <property type="gene ID" value="ENSMUSG00000027282.18"/>
</dbReference>
<dbReference type="GeneID" id="56428"/>
<dbReference type="KEGG" id="mmu:56428"/>
<dbReference type="UCSC" id="uc008ktn.1">
    <property type="organism name" value="mouse"/>
</dbReference>
<dbReference type="AGR" id="MGI:1929260"/>
<dbReference type="CTD" id="23788"/>
<dbReference type="MGI" id="MGI:1929260">
    <property type="gene designation" value="Mtch2"/>
</dbReference>
<dbReference type="VEuPathDB" id="HostDB:ENSMUSG00000027282"/>
<dbReference type="eggNOG" id="KOG2745">
    <property type="taxonomic scope" value="Eukaryota"/>
</dbReference>
<dbReference type="GeneTree" id="ENSGT00390000000020"/>
<dbReference type="InParanoid" id="Q791V5"/>
<dbReference type="OMA" id="HPFHVIA"/>
<dbReference type="OrthoDB" id="10253709at2759"/>
<dbReference type="PhylomeDB" id="Q791V5"/>
<dbReference type="TreeFam" id="TF313721"/>
<dbReference type="BioGRID-ORCS" id="56428">
    <property type="hits" value="10 hits in 78 CRISPR screens"/>
</dbReference>
<dbReference type="CD-CODE" id="CE726F99">
    <property type="entry name" value="Postsynaptic density"/>
</dbReference>
<dbReference type="ChiTaRS" id="Mtch2">
    <property type="organism name" value="mouse"/>
</dbReference>
<dbReference type="PRO" id="PR:Q791V5"/>
<dbReference type="Proteomes" id="UP000000589">
    <property type="component" value="Chromosome 2"/>
</dbReference>
<dbReference type="RNAct" id="Q791V5">
    <property type="molecule type" value="protein"/>
</dbReference>
<dbReference type="Bgee" id="ENSMUSG00000027282">
    <property type="expression patterns" value="Expressed in spermatid and 85 other cell types or tissues"/>
</dbReference>
<dbReference type="ExpressionAtlas" id="Q791V5">
    <property type="expression patterns" value="baseline and differential"/>
</dbReference>
<dbReference type="GO" id="GO:0005743">
    <property type="term" value="C:mitochondrial inner membrane"/>
    <property type="evidence" value="ECO:0007005"/>
    <property type="project" value="MGI"/>
</dbReference>
<dbReference type="GO" id="GO:0005741">
    <property type="term" value="C:mitochondrial outer membrane"/>
    <property type="evidence" value="ECO:0000314"/>
    <property type="project" value="MGI"/>
</dbReference>
<dbReference type="GO" id="GO:0005739">
    <property type="term" value="C:mitochondrion"/>
    <property type="evidence" value="ECO:0007005"/>
    <property type="project" value="MGI"/>
</dbReference>
<dbReference type="GO" id="GO:0032977">
    <property type="term" value="F:membrane insertase activity"/>
    <property type="evidence" value="ECO:0000250"/>
    <property type="project" value="UniProtKB"/>
</dbReference>
<dbReference type="GO" id="GO:0071478">
    <property type="term" value="P:cellular response to radiation"/>
    <property type="evidence" value="ECO:0000315"/>
    <property type="project" value="MGI"/>
</dbReference>
<dbReference type="GO" id="GO:0090152">
    <property type="term" value="P:establishment of protein localization to mitochondrial membrane involved in mitochondrial fission"/>
    <property type="evidence" value="ECO:0000315"/>
    <property type="project" value="MGI"/>
</dbReference>
<dbReference type="GO" id="GO:0061484">
    <property type="term" value="P:hematopoietic stem cell homeostasis"/>
    <property type="evidence" value="ECO:0000315"/>
    <property type="project" value="MGI"/>
</dbReference>
<dbReference type="GO" id="GO:0035701">
    <property type="term" value="P:hematopoietic stem cell migration"/>
    <property type="evidence" value="ECO:0000315"/>
    <property type="project" value="MGI"/>
</dbReference>
<dbReference type="GO" id="GO:0097284">
    <property type="term" value="P:hepatocyte apoptotic process"/>
    <property type="evidence" value="ECO:0000316"/>
    <property type="project" value="MGI"/>
</dbReference>
<dbReference type="GO" id="GO:0006089">
    <property type="term" value="P:lactate metabolic process"/>
    <property type="evidence" value="ECO:0000315"/>
    <property type="project" value="MGI"/>
</dbReference>
<dbReference type="GO" id="GO:0055088">
    <property type="term" value="P:lipid homeostasis"/>
    <property type="evidence" value="ECO:0000315"/>
    <property type="project" value="UniProtKB"/>
</dbReference>
<dbReference type="GO" id="GO:0042775">
    <property type="term" value="P:mitochondrial ATP synthesis coupled electron transport"/>
    <property type="evidence" value="ECO:0000315"/>
    <property type="project" value="MGI"/>
</dbReference>
<dbReference type="GO" id="GO:0045820">
    <property type="term" value="P:negative regulation of glycolytic process"/>
    <property type="evidence" value="ECO:0000315"/>
    <property type="project" value="MGI"/>
</dbReference>
<dbReference type="GO" id="GO:0010917">
    <property type="term" value="P:negative regulation of mitochondrial membrane potential"/>
    <property type="evidence" value="ECO:0000315"/>
    <property type="project" value="MGI"/>
</dbReference>
<dbReference type="GO" id="GO:0043065">
    <property type="term" value="P:positive regulation of apoptotic process"/>
    <property type="evidence" value="ECO:0000315"/>
    <property type="project" value="UniProtKB"/>
</dbReference>
<dbReference type="GO" id="GO:1902231">
    <property type="term" value="P:positive regulation of intrinsic apoptotic signaling pathway in response to DNA damage"/>
    <property type="evidence" value="ECO:0000315"/>
    <property type="project" value="MGI"/>
</dbReference>
<dbReference type="GO" id="GO:2000738">
    <property type="term" value="P:positive regulation of stem cell differentiation"/>
    <property type="evidence" value="ECO:0000315"/>
    <property type="project" value="UniProtKB"/>
</dbReference>
<dbReference type="GO" id="GO:0045040">
    <property type="term" value="P:protein insertion into mitochondrial outer membrane"/>
    <property type="evidence" value="ECO:0000250"/>
    <property type="project" value="UniProtKB"/>
</dbReference>
<dbReference type="GO" id="GO:0070585">
    <property type="term" value="P:protein localization to mitochondrion"/>
    <property type="evidence" value="ECO:0000315"/>
    <property type="project" value="MGI"/>
</dbReference>
<dbReference type="GO" id="GO:0010635">
    <property type="term" value="P:regulation of mitochondrial fusion"/>
    <property type="evidence" value="ECO:0000315"/>
    <property type="project" value="UniProtKB"/>
</dbReference>
<dbReference type="GO" id="GO:1902108">
    <property type="term" value="P:regulation of mitochondrial membrane permeability involved in apoptotic process"/>
    <property type="evidence" value="ECO:0000316"/>
    <property type="project" value="MGI"/>
</dbReference>
<dbReference type="FunFam" id="1.50.40.10:FF:000035">
    <property type="entry name" value="Mitochondrial carrier homolog 2 variant"/>
    <property type="match status" value="1"/>
</dbReference>
<dbReference type="Gene3D" id="1.50.40.10">
    <property type="entry name" value="Mitochondrial carrier domain"/>
    <property type="match status" value="1"/>
</dbReference>
<dbReference type="InterPro" id="IPR018108">
    <property type="entry name" value="Mitochondrial_sb/sol_carrier"/>
</dbReference>
<dbReference type="InterPro" id="IPR023395">
    <property type="entry name" value="Mt_carrier_dom_sf"/>
</dbReference>
<dbReference type="PANTHER" id="PTHR10780">
    <property type="entry name" value="MITOCHONDRIAL CARRIER HOMOLOG"/>
    <property type="match status" value="1"/>
</dbReference>
<dbReference type="PANTHER" id="PTHR10780:SF20">
    <property type="entry name" value="MITOCHONDRIAL CARRIER HOMOLOG 2"/>
    <property type="match status" value="1"/>
</dbReference>
<dbReference type="Pfam" id="PF00153">
    <property type="entry name" value="Mito_carr"/>
    <property type="match status" value="1"/>
</dbReference>
<dbReference type="SUPFAM" id="SSF103506">
    <property type="entry name" value="Mitochondrial carrier"/>
    <property type="match status" value="1"/>
</dbReference>
<dbReference type="PROSITE" id="PS50920">
    <property type="entry name" value="SOLCAR"/>
    <property type="match status" value="2"/>
</dbReference>
<proteinExistence type="evidence at protein level"/>
<reference key="1">
    <citation type="submission" date="1999-08" db="EMBL/GenBank/DDBJ databases">
        <title>Identification of an evolutionary conserved mitochondrial carrier family from various organisms.</title>
        <authorList>
            <person name="Jang J.S."/>
            <person name="Hahn Y."/>
            <person name="Park C."/>
            <person name="Chung J.H."/>
        </authorList>
    </citation>
    <scope>NUCLEOTIDE SEQUENCE [MRNA]</scope>
</reference>
<reference key="2">
    <citation type="journal article" date="2005" name="Science">
        <title>The transcriptional landscape of the mammalian genome.</title>
        <authorList>
            <person name="Carninci P."/>
            <person name="Kasukawa T."/>
            <person name="Katayama S."/>
            <person name="Gough J."/>
            <person name="Frith M.C."/>
            <person name="Maeda N."/>
            <person name="Oyama R."/>
            <person name="Ravasi T."/>
            <person name="Lenhard B."/>
            <person name="Wells C."/>
            <person name="Kodzius R."/>
            <person name="Shimokawa K."/>
            <person name="Bajic V.B."/>
            <person name="Brenner S.E."/>
            <person name="Batalov S."/>
            <person name="Forrest A.R."/>
            <person name="Zavolan M."/>
            <person name="Davis M.J."/>
            <person name="Wilming L.G."/>
            <person name="Aidinis V."/>
            <person name="Allen J.E."/>
            <person name="Ambesi-Impiombato A."/>
            <person name="Apweiler R."/>
            <person name="Aturaliya R.N."/>
            <person name="Bailey T.L."/>
            <person name="Bansal M."/>
            <person name="Baxter L."/>
            <person name="Beisel K.W."/>
            <person name="Bersano T."/>
            <person name="Bono H."/>
            <person name="Chalk A.M."/>
            <person name="Chiu K.P."/>
            <person name="Choudhary V."/>
            <person name="Christoffels A."/>
            <person name="Clutterbuck D.R."/>
            <person name="Crowe M.L."/>
            <person name="Dalla E."/>
            <person name="Dalrymple B.P."/>
            <person name="de Bono B."/>
            <person name="Della Gatta G."/>
            <person name="di Bernardo D."/>
            <person name="Down T."/>
            <person name="Engstrom P."/>
            <person name="Fagiolini M."/>
            <person name="Faulkner G."/>
            <person name="Fletcher C.F."/>
            <person name="Fukushima T."/>
            <person name="Furuno M."/>
            <person name="Futaki S."/>
            <person name="Gariboldi M."/>
            <person name="Georgii-Hemming P."/>
            <person name="Gingeras T.R."/>
            <person name="Gojobori T."/>
            <person name="Green R.E."/>
            <person name="Gustincich S."/>
            <person name="Harbers M."/>
            <person name="Hayashi Y."/>
            <person name="Hensch T.K."/>
            <person name="Hirokawa N."/>
            <person name="Hill D."/>
            <person name="Huminiecki L."/>
            <person name="Iacono M."/>
            <person name="Ikeo K."/>
            <person name="Iwama A."/>
            <person name="Ishikawa T."/>
            <person name="Jakt M."/>
            <person name="Kanapin A."/>
            <person name="Katoh M."/>
            <person name="Kawasawa Y."/>
            <person name="Kelso J."/>
            <person name="Kitamura H."/>
            <person name="Kitano H."/>
            <person name="Kollias G."/>
            <person name="Krishnan S.P."/>
            <person name="Kruger A."/>
            <person name="Kummerfeld S.K."/>
            <person name="Kurochkin I.V."/>
            <person name="Lareau L.F."/>
            <person name="Lazarevic D."/>
            <person name="Lipovich L."/>
            <person name="Liu J."/>
            <person name="Liuni S."/>
            <person name="McWilliam S."/>
            <person name="Madan Babu M."/>
            <person name="Madera M."/>
            <person name="Marchionni L."/>
            <person name="Matsuda H."/>
            <person name="Matsuzawa S."/>
            <person name="Miki H."/>
            <person name="Mignone F."/>
            <person name="Miyake S."/>
            <person name="Morris K."/>
            <person name="Mottagui-Tabar S."/>
            <person name="Mulder N."/>
            <person name="Nakano N."/>
            <person name="Nakauchi H."/>
            <person name="Ng P."/>
            <person name="Nilsson R."/>
            <person name="Nishiguchi S."/>
            <person name="Nishikawa S."/>
            <person name="Nori F."/>
            <person name="Ohara O."/>
            <person name="Okazaki Y."/>
            <person name="Orlando V."/>
            <person name="Pang K.C."/>
            <person name="Pavan W.J."/>
            <person name="Pavesi G."/>
            <person name="Pesole G."/>
            <person name="Petrovsky N."/>
            <person name="Piazza S."/>
            <person name="Reed J."/>
            <person name="Reid J.F."/>
            <person name="Ring B.Z."/>
            <person name="Ringwald M."/>
            <person name="Rost B."/>
            <person name="Ruan Y."/>
            <person name="Salzberg S.L."/>
            <person name="Sandelin A."/>
            <person name="Schneider C."/>
            <person name="Schoenbach C."/>
            <person name="Sekiguchi K."/>
            <person name="Semple C.A."/>
            <person name="Seno S."/>
            <person name="Sessa L."/>
            <person name="Sheng Y."/>
            <person name="Shibata Y."/>
            <person name="Shimada H."/>
            <person name="Shimada K."/>
            <person name="Silva D."/>
            <person name="Sinclair B."/>
            <person name="Sperling S."/>
            <person name="Stupka E."/>
            <person name="Sugiura K."/>
            <person name="Sultana R."/>
            <person name="Takenaka Y."/>
            <person name="Taki K."/>
            <person name="Tammoja K."/>
            <person name="Tan S.L."/>
            <person name="Tang S."/>
            <person name="Taylor M.S."/>
            <person name="Tegner J."/>
            <person name="Teichmann S.A."/>
            <person name="Ueda H.R."/>
            <person name="van Nimwegen E."/>
            <person name="Verardo R."/>
            <person name="Wei C.L."/>
            <person name="Yagi K."/>
            <person name="Yamanishi H."/>
            <person name="Zabarovsky E."/>
            <person name="Zhu S."/>
            <person name="Zimmer A."/>
            <person name="Hide W."/>
            <person name="Bult C."/>
            <person name="Grimmond S.M."/>
            <person name="Teasdale R.D."/>
            <person name="Liu E.T."/>
            <person name="Brusic V."/>
            <person name="Quackenbush J."/>
            <person name="Wahlestedt C."/>
            <person name="Mattick J.S."/>
            <person name="Hume D.A."/>
            <person name="Kai C."/>
            <person name="Sasaki D."/>
            <person name="Tomaru Y."/>
            <person name="Fukuda S."/>
            <person name="Kanamori-Katayama M."/>
            <person name="Suzuki M."/>
            <person name="Aoki J."/>
            <person name="Arakawa T."/>
            <person name="Iida J."/>
            <person name="Imamura K."/>
            <person name="Itoh M."/>
            <person name="Kato T."/>
            <person name="Kawaji H."/>
            <person name="Kawagashira N."/>
            <person name="Kawashima T."/>
            <person name="Kojima M."/>
            <person name="Kondo S."/>
            <person name="Konno H."/>
            <person name="Nakano K."/>
            <person name="Ninomiya N."/>
            <person name="Nishio T."/>
            <person name="Okada M."/>
            <person name="Plessy C."/>
            <person name="Shibata K."/>
            <person name="Shiraki T."/>
            <person name="Suzuki S."/>
            <person name="Tagami M."/>
            <person name="Waki K."/>
            <person name="Watahiki A."/>
            <person name="Okamura-Oho Y."/>
            <person name="Suzuki H."/>
            <person name="Kawai J."/>
            <person name="Hayashizaki Y."/>
        </authorList>
    </citation>
    <scope>NUCLEOTIDE SEQUENCE [LARGE SCALE MRNA]</scope>
    <source>
        <strain>C57BL/6J</strain>
        <tissue>Heart</tissue>
        <tissue>Hippocampus</tissue>
        <tissue>Small intestine</tissue>
        <tissue>Stomach</tissue>
        <tissue>Testis</tissue>
        <tissue>Tongue</tissue>
    </source>
</reference>
<reference key="3">
    <citation type="journal article" date="2004" name="Genome Res.">
        <title>The status, quality, and expansion of the NIH full-length cDNA project: the Mammalian Gene Collection (MGC).</title>
        <authorList>
            <consortium name="The MGC Project Team"/>
        </authorList>
    </citation>
    <scope>NUCLEOTIDE SEQUENCE [LARGE SCALE MRNA]</scope>
    <source>
        <strain>FVB/N</strain>
        <tissue>Mammary tumor</tissue>
    </source>
</reference>
<reference key="4">
    <citation type="submission" date="2007-04" db="UniProtKB">
        <authorList>
            <person name="Lubec G."/>
            <person name="Kang S.U."/>
        </authorList>
    </citation>
    <scope>PROTEIN SEQUENCE OF 69-77; 91-119 AND 172-185</scope>
    <scope>IDENTIFICATION BY MASS SPECTROMETRY</scope>
    <source>
        <strain>C57BL/6J</strain>
        <tissue>Brain</tissue>
    </source>
</reference>
<reference key="5">
    <citation type="journal article" date="2002" name="Neoplasia">
        <title>Met-HGF/SF signal transduction induces mimp, a novel mitochondrial carrier homologue, which leads to mitochondrial depolarization.</title>
        <authorList>
            <person name="Yerushalmi G.M."/>
            <person name="Leibowitz-Amit R."/>
            <person name="Shaharabany M."/>
            <person name="Tsarfaty I."/>
        </authorList>
    </citation>
    <scope>TISSUE SPECIFICITY</scope>
</reference>
<reference key="6">
    <citation type="journal article" date="2005" name="Mol. Cell. Biol.">
        <title>Mitochondrial carrier homolog 2 is a target of tBID in cells signaled to die by tumor necrosis factor alpha.</title>
        <authorList>
            <person name="Grinberg M."/>
            <person name="Schwarz M."/>
            <person name="Zaltsman Y."/>
            <person name="Eini T."/>
            <person name="Niv H."/>
            <person name="Pietrokovski S."/>
            <person name="Gross A."/>
        </authorList>
    </citation>
    <scope>SUBUNIT</scope>
    <scope>SUBCELLULAR LOCATION</scope>
    <scope>FUNCTION</scope>
    <scope>INTERACTION WITH P15 BID</scope>
</reference>
<reference key="7">
    <citation type="journal article" date="2010" name="Cell">
        <title>A tissue-specific atlas of mouse protein phosphorylation and expression.</title>
        <authorList>
            <person name="Huttlin E.L."/>
            <person name="Jedrychowski M.P."/>
            <person name="Elias J.E."/>
            <person name="Goswami T."/>
            <person name="Rad R."/>
            <person name="Beausoleil S.A."/>
            <person name="Villen J."/>
            <person name="Haas W."/>
            <person name="Sowa M.E."/>
            <person name="Gygi S.P."/>
        </authorList>
    </citation>
    <scope>IDENTIFICATION BY MASS SPECTROMETRY [LARGE SCALE ANALYSIS]</scope>
    <source>
        <tissue>Brain</tissue>
        <tissue>Brown adipose tissue</tissue>
        <tissue>Heart</tissue>
        <tissue>Kidney</tissue>
        <tissue>Liver</tissue>
        <tissue>Lung</tissue>
        <tissue>Pancreas</tissue>
        <tissue>Spleen</tissue>
        <tissue>Testis</tissue>
    </source>
</reference>
<reference key="8">
    <citation type="journal article" date="2010" name="Nat. Cell Biol.">
        <title>MTCH2/MIMP is a major facilitator of tBID recruitment to mitochondria.</title>
        <authorList>
            <person name="Zaltsman Y."/>
            <person name="Shachnai L."/>
            <person name="Yivgi-Ohana N."/>
            <person name="Schwarz M."/>
            <person name="Maryanovich M."/>
            <person name="Houtkooper R.H."/>
            <person name="Vaz F.M."/>
            <person name="De Leonardis F."/>
            <person name="Fiermonte G."/>
            <person name="Palmieri F."/>
            <person name="Gillissen B."/>
            <person name="Daniel P.T."/>
            <person name="Jimenez E."/>
            <person name="Walsh S."/>
            <person name="Koehler C.M."/>
            <person name="Roy S.S."/>
            <person name="Walter L."/>
            <person name="Hajnoczky G."/>
            <person name="Gross A."/>
        </authorList>
    </citation>
    <scope>SUBCELLULAR LOCATION</scope>
    <scope>FUNCTION</scope>
    <scope>DISRUPTION PHENOTYPE</scope>
    <scope>INTERACTION WITH P15 BID</scope>
</reference>
<reference key="9">
    <citation type="journal article" date="2015" name="Nat. Commun.">
        <title>An MTCH2 pathway repressing mitochondria metabolism regulates haematopoietic stem cell fate.</title>
        <authorList>
            <person name="Maryanovich M."/>
            <person name="Zaltsman Y."/>
            <person name="Ruggiero A."/>
            <person name="Goldman A."/>
            <person name="Shachnai L."/>
            <person name="Zaidman S.L."/>
            <person name="Porat Z."/>
            <person name="Golan K."/>
            <person name="Lapidot T."/>
            <person name="Gross A."/>
        </authorList>
    </citation>
    <scope>FUNCTION</scope>
</reference>
<reference key="10">
    <citation type="journal article" date="2016" name="Cell Rep.">
        <title>Loss of Muscle MTCH2 Increases Whole-Body Energy Utilization and Protects from Diet-Induced Obesity.</title>
        <authorList>
            <person name="Buzaglo-Azriel L."/>
            <person name="Kuperman Y."/>
            <person name="Tsoory M."/>
            <person name="Zaltsman Y."/>
            <person name="Shachnai L."/>
            <person name="Zaidman S.L."/>
            <person name="Bassat E."/>
            <person name="Michailovici I."/>
            <person name="Sarver A."/>
            <person name="Tzahor E."/>
            <person name="Haran M."/>
            <person name="Vernochet C."/>
            <person name="Gross A."/>
        </authorList>
    </citation>
    <scope>DISRUPTION PHENOTYPE</scope>
    <scope>FUNCTION</scope>
    <scope>CONDITIONAL KNOCKOUT IN MUSCLE CELLS</scope>
</reference>
<reference key="11">
    <citation type="journal article" date="2017" name="Obesity">
        <title>MTCH2 is a conserved regulator of lipid homeostasis.</title>
        <authorList>
            <person name="Rottiers V."/>
            <person name="Francisco A."/>
            <person name="Platov M."/>
            <person name="Zaltsman Y."/>
            <person name="Ruggiero A."/>
            <person name="Lee S.S."/>
            <person name="Gross A."/>
            <person name="Libert S."/>
        </authorList>
    </citation>
    <scope>FUNCTION</scope>
</reference>
<reference key="12">
    <citation type="journal article" date="2018" name="Nat. Commun.">
        <title>MTCH2-mediated mitochondrial fusion drives exit from naive pluripotency in embryonic stem cells.</title>
        <authorList>
            <person name="Bahat A."/>
            <person name="Goldman A."/>
            <person name="Zaltsman Y."/>
            <person name="Khan D.H."/>
            <person name="Halperin C."/>
            <person name="Amzallag E."/>
            <person name="Krupalnik V."/>
            <person name="Mullokandov M."/>
            <person name="Silberman A."/>
            <person name="Erez A."/>
            <person name="Schimmer A.D."/>
            <person name="Hanna J.H."/>
            <person name="Gross A."/>
        </authorList>
    </citation>
    <scope>FUNCTION</scope>
</reference>
<keyword id="KW-0007">Acetylation</keyword>
<keyword id="KW-0053">Apoptosis</keyword>
<keyword id="KW-0903">Direct protein sequencing</keyword>
<keyword id="KW-0472">Membrane</keyword>
<keyword id="KW-0496">Mitochondrion</keyword>
<keyword id="KW-1000">Mitochondrion outer membrane</keyword>
<keyword id="KW-1185">Reference proteome</keyword>
<keyword id="KW-0677">Repeat</keyword>
<keyword id="KW-0812">Transmembrane</keyword>
<keyword id="KW-1133">Transmembrane helix</keyword>
<accession>Q791V5</accession>
<accession>Q3TPS5</accession>
<accession>Q99LZ6</accession>
<accession>Q9D060</accession>
<accession>Q9D7Y2</accession>
<accession>Q9QZP3</accession>
<gene>
    <name evidence="12" type="primary">Mtch2</name>
    <name evidence="10" type="synonym">Mimp</name>
</gene>
<sequence>MADAASQVLLGSGLTILSQPLMYVKVLIQVGYEPLPPTIGRNIFGRQVCQLPGLFCYAQHIASIDGRRGLFTGLTPRLCSGVLGTVVHGKVLQYYQESEKPEELGSVTVQKEYSSSFDRVIKETTREMIARSAATLITHPFHVITLRSMVQFIGRESKYCGLCDSIVTIYREEGIVGFFAGLIPRLLGDIISLWLCNSLAYLINTYALDSGVSTMNEMKSYSQAVTGFFASMLTYPFVLVSNLMAVNNCGLAGGSPPYSPIYTSWIDCWCMLQKAGNMSRGNSLFFRKVPCGKTYCYDLRMLI</sequence>
<organism>
    <name type="scientific">Mus musculus</name>
    <name type="common">Mouse</name>
    <dbReference type="NCBI Taxonomy" id="10090"/>
    <lineage>
        <taxon>Eukaryota</taxon>
        <taxon>Metazoa</taxon>
        <taxon>Chordata</taxon>
        <taxon>Craniata</taxon>
        <taxon>Vertebrata</taxon>
        <taxon>Euteleostomi</taxon>
        <taxon>Mammalia</taxon>
        <taxon>Eutheria</taxon>
        <taxon>Euarchontoglires</taxon>
        <taxon>Glires</taxon>
        <taxon>Rodentia</taxon>
        <taxon>Myomorpha</taxon>
        <taxon>Muroidea</taxon>
        <taxon>Muridae</taxon>
        <taxon>Murinae</taxon>
        <taxon>Mus</taxon>
        <taxon>Mus</taxon>
    </lineage>
</organism>
<protein>
    <recommendedName>
        <fullName>Mitochondrial carrier homolog 2</fullName>
    </recommendedName>
    <alternativeName>
        <fullName evidence="10">Met-induced mitochondrial protein</fullName>
    </alternativeName>
</protein>
<comment type="function">
    <text evidence="1 5 6 7 8 9">Protein insertase that mediates insertion of transmembrane proteins into the mitochondrial outer membrane. Catalyzes insertion of proteins with alpha-helical transmembrane regions, such as signal-anchored, tail-anchored and multi-pass membrane proteins. Does not mediate insertion of beta-barrel transmembrane proteins (By similarity). Also acts as a receptor for the truncated form of pro-apoptotic BH3-interacting domain death agonist (p15 BID) and has therefore a critical function in apoptosis (PubMed:20436477, PubMed:26219591, PubMed:26876167, PubMed:30510213). Regulates the quiescence/cycling of hematopoietic stem cells (HSCs) (PubMed:20436477, PubMed:26219591, PubMed:26876167). Acts as a regulator of mitochondrial fusion, essential for the naive-to-primed interconversion of embryonic stem cells (ESCs) (PubMed:30510213). Acts as a regulator of lipid homeostasis and has a regulatory role in adipocyte differentiation and biology (PubMed:26876167, PubMed:28127879).</text>
</comment>
<comment type="subunit">
    <text evidence="4 5">Interacts with p15BID.</text>
</comment>
<comment type="subcellular location">
    <subcellularLocation>
        <location evidence="4 5">Mitochondrion outer membrane</location>
        <topology evidence="11">Multi-pass membrane protein</topology>
    </subcellularLocation>
</comment>
<comment type="tissue specificity">
    <text evidence="3">Expressed in a wide variety of tissues. Predominant expressed in liver, kidney, heart, skeletal muscle and testis.</text>
</comment>
<comment type="disruption phenotype">
    <text evidence="5 7">Mice homozygous for a knockout allele exhibit abnormal mesoderm development, disorganized extraembryonic tissue, lack of amnion and chorion formation, decreased embryo size and lethality at around 7.5 dpc (PubMed:20436477). Conditional knockout in the liver decreases the sensitivity of mice to Fas-induced hepatocellular apoptosis and prevents the recruitment of tBID to liver mitochondria (PubMed:20436477). Conditional knockout in skeletal muscle results in increased mitochondrial mass and metabolism granting protection against diet-induced obesity (PubMed:26876167).</text>
</comment>
<comment type="similarity">
    <text evidence="11">Belongs to the mitochondrial carrier (TC 2.A.29) family.</text>
</comment>
<name>MTCH2_MOUSE</name>
<evidence type="ECO:0000250" key="1">
    <source>
        <dbReference type="UniProtKB" id="Q9Y6C9"/>
    </source>
</evidence>
<evidence type="ECO:0000255" key="2"/>
<evidence type="ECO:0000269" key="3">
    <source>
    </source>
</evidence>
<evidence type="ECO:0000269" key="4">
    <source>
    </source>
</evidence>
<evidence type="ECO:0000269" key="5">
    <source>
    </source>
</evidence>
<evidence type="ECO:0000269" key="6">
    <source>
    </source>
</evidence>
<evidence type="ECO:0000269" key="7">
    <source>
    </source>
</evidence>
<evidence type="ECO:0000269" key="8">
    <source>
    </source>
</evidence>
<evidence type="ECO:0000269" key="9">
    <source>
    </source>
</evidence>
<evidence type="ECO:0000303" key="10">
    <source>
    </source>
</evidence>
<evidence type="ECO:0000305" key="11"/>
<evidence type="ECO:0000312" key="12">
    <source>
        <dbReference type="MGI" id="MGI:1929260"/>
    </source>
</evidence>
<feature type="initiator methionine" description="Removed" evidence="1">
    <location>
        <position position="1"/>
    </location>
</feature>
<feature type="chain" id="PRO_0000090638" description="Mitochondrial carrier homolog 2">
    <location>
        <begin position="2"/>
        <end position="303"/>
    </location>
</feature>
<feature type="topological domain" description="Mitochondrial intermembrane" evidence="11">
    <location>
        <begin position="2"/>
        <end position="15"/>
    </location>
</feature>
<feature type="transmembrane region" description="Helical; Name=1" evidence="2">
    <location>
        <begin position="16"/>
        <end position="36"/>
    </location>
</feature>
<feature type="topological domain" description="Cytoplasmic" evidence="11">
    <location>
        <begin position="37"/>
        <end position="77"/>
    </location>
</feature>
<feature type="transmembrane region" description="Helical; Name=2" evidence="2">
    <location>
        <begin position="78"/>
        <end position="92"/>
    </location>
</feature>
<feature type="topological domain" description="Mitochondrial intermembrane" evidence="11">
    <location>
        <begin position="93"/>
        <end position="135"/>
    </location>
</feature>
<feature type="transmembrane region" description="Helical; Name=3" evidence="2">
    <location>
        <begin position="136"/>
        <end position="156"/>
    </location>
</feature>
<feature type="topological domain" description="Cytoplasmic" evidence="11">
    <location>
        <begin position="157"/>
        <end position="180"/>
    </location>
</feature>
<feature type="transmembrane region" description="Helical; Name=4" evidence="2">
    <location>
        <begin position="181"/>
        <end position="199"/>
    </location>
</feature>
<feature type="topological domain" description="Mitochondrial intermembrane" evidence="11">
    <location>
        <begin position="200"/>
        <end position="231"/>
    </location>
</feature>
<feature type="transmembrane region" description="Helical; Name=5" evidence="2">
    <location>
        <begin position="232"/>
        <end position="252"/>
    </location>
</feature>
<feature type="topological domain" description="Cytoplasmic" evidence="11">
    <location>
        <begin position="253"/>
        <end position="280"/>
    </location>
</feature>
<feature type="transmembrane region" description="Helical; Name=6" evidence="2">
    <location>
        <begin position="281"/>
        <end position="303"/>
    </location>
</feature>
<feature type="repeat" description="Solcar 1">
    <location>
        <begin position="2"/>
        <end position="98"/>
    </location>
</feature>
<feature type="repeat" description="Solcar 2">
    <location>
        <begin position="118"/>
        <end position="206"/>
    </location>
</feature>
<feature type="modified residue" description="N-acetylalanine" evidence="1">
    <location>
        <position position="2"/>
    </location>
</feature>
<feature type="sequence conflict" description="In Ref. 2; BAB27839." evidence="11" ref="2">
    <original>Y</original>
    <variation>C</variation>
    <location>
        <position position="206"/>
    </location>
</feature>
<feature type="sequence conflict" description="In Ref. 2; BAB25848." evidence="11" ref="2">
    <original>A</original>
    <variation>T</variation>
    <location>
        <position position="207"/>
    </location>
</feature>